<feature type="chain" id="PRO_0000346215" description="D-ribose pyranase">
    <location>
        <begin position="1"/>
        <end position="131"/>
    </location>
</feature>
<feature type="active site" description="Proton donor" evidence="1">
    <location>
        <position position="20"/>
    </location>
</feature>
<feature type="binding site" evidence="1">
    <location>
        <position position="28"/>
    </location>
    <ligand>
        <name>substrate</name>
    </ligand>
</feature>
<feature type="binding site" evidence="1">
    <location>
        <position position="98"/>
    </location>
    <ligand>
        <name>substrate</name>
    </ligand>
</feature>
<feature type="binding site" evidence="1">
    <location>
        <begin position="120"/>
        <end position="122"/>
    </location>
    <ligand>
        <name>substrate</name>
    </ligand>
</feature>
<organism>
    <name type="scientific">Lactobacillus acidophilus (strain ATCC 700396 / NCK56 / N2 / NCFM)</name>
    <dbReference type="NCBI Taxonomy" id="272621"/>
    <lineage>
        <taxon>Bacteria</taxon>
        <taxon>Bacillati</taxon>
        <taxon>Bacillota</taxon>
        <taxon>Bacilli</taxon>
        <taxon>Lactobacillales</taxon>
        <taxon>Lactobacillaceae</taxon>
        <taxon>Lactobacillus</taxon>
    </lineage>
</organism>
<name>RBSD_LACAC</name>
<accession>Q5FJ20</accession>
<dbReference type="EC" id="5.4.99.62" evidence="1"/>
<dbReference type="EMBL" id="CP000033">
    <property type="protein sequence ID" value="AAV43304.1"/>
    <property type="molecule type" value="Genomic_DNA"/>
</dbReference>
<dbReference type="RefSeq" id="WP_011254480.1">
    <property type="nucleotide sequence ID" value="NC_006814.3"/>
</dbReference>
<dbReference type="RefSeq" id="YP_194335.1">
    <property type="nucleotide sequence ID" value="NC_006814.3"/>
</dbReference>
<dbReference type="SMR" id="Q5FJ20"/>
<dbReference type="STRING" id="272621.LBA1484"/>
<dbReference type="GeneID" id="93289446"/>
<dbReference type="KEGG" id="lac:LBA1484"/>
<dbReference type="PATRIC" id="fig|272621.13.peg.1407"/>
<dbReference type="eggNOG" id="COG1869">
    <property type="taxonomic scope" value="Bacteria"/>
</dbReference>
<dbReference type="HOGENOM" id="CLU_135498_0_0_9"/>
<dbReference type="OrthoDB" id="9805009at2"/>
<dbReference type="BioCyc" id="LACI272621:G1G49-1453-MONOMER"/>
<dbReference type="UniPathway" id="UPA00916">
    <property type="reaction ID" value="UER00888"/>
</dbReference>
<dbReference type="Proteomes" id="UP000006381">
    <property type="component" value="Chromosome"/>
</dbReference>
<dbReference type="GO" id="GO:0005829">
    <property type="term" value="C:cytosol"/>
    <property type="evidence" value="ECO:0007669"/>
    <property type="project" value="TreeGrafter"/>
</dbReference>
<dbReference type="GO" id="GO:0062193">
    <property type="term" value="F:D-ribose pyranase activity"/>
    <property type="evidence" value="ECO:0007669"/>
    <property type="project" value="UniProtKB-EC"/>
</dbReference>
<dbReference type="GO" id="GO:0016872">
    <property type="term" value="F:intramolecular lyase activity"/>
    <property type="evidence" value="ECO:0007669"/>
    <property type="project" value="UniProtKB-UniRule"/>
</dbReference>
<dbReference type="GO" id="GO:0048029">
    <property type="term" value="F:monosaccharide binding"/>
    <property type="evidence" value="ECO:0007669"/>
    <property type="project" value="InterPro"/>
</dbReference>
<dbReference type="GO" id="GO:0019303">
    <property type="term" value="P:D-ribose catabolic process"/>
    <property type="evidence" value="ECO:0007669"/>
    <property type="project" value="UniProtKB-UniRule"/>
</dbReference>
<dbReference type="FunFam" id="3.40.1650.10:FF:000004">
    <property type="entry name" value="D-ribose pyranase"/>
    <property type="match status" value="1"/>
</dbReference>
<dbReference type="Gene3D" id="3.40.1650.10">
    <property type="entry name" value="RbsD-like domain"/>
    <property type="match status" value="1"/>
</dbReference>
<dbReference type="HAMAP" id="MF_01661">
    <property type="entry name" value="D_rib_pyranase"/>
    <property type="match status" value="1"/>
</dbReference>
<dbReference type="InterPro" id="IPR023064">
    <property type="entry name" value="D-ribose_pyranase"/>
</dbReference>
<dbReference type="InterPro" id="IPR023750">
    <property type="entry name" value="RbsD-like_sf"/>
</dbReference>
<dbReference type="InterPro" id="IPR007721">
    <property type="entry name" value="RbsD_FucU"/>
</dbReference>
<dbReference type="NCBIfam" id="NF008761">
    <property type="entry name" value="PRK11797.1"/>
    <property type="match status" value="1"/>
</dbReference>
<dbReference type="PANTHER" id="PTHR37831">
    <property type="entry name" value="D-RIBOSE PYRANASE"/>
    <property type="match status" value="1"/>
</dbReference>
<dbReference type="PANTHER" id="PTHR37831:SF1">
    <property type="entry name" value="D-RIBOSE PYRANASE"/>
    <property type="match status" value="1"/>
</dbReference>
<dbReference type="Pfam" id="PF05025">
    <property type="entry name" value="RbsD_FucU"/>
    <property type="match status" value="1"/>
</dbReference>
<dbReference type="SUPFAM" id="SSF102546">
    <property type="entry name" value="RbsD-like"/>
    <property type="match status" value="1"/>
</dbReference>
<proteinExistence type="inferred from homology"/>
<reference key="1">
    <citation type="journal article" date="2005" name="Proc. Natl. Acad. Sci. U.S.A.">
        <title>Complete genome sequence of the probiotic lactic acid bacterium Lactobacillus acidophilus NCFM.</title>
        <authorList>
            <person name="Altermann E."/>
            <person name="Russell W.M."/>
            <person name="Azcarate-Peril M.A."/>
            <person name="Barrangou R."/>
            <person name="Buck B.L."/>
            <person name="McAuliffe O."/>
            <person name="Souther N."/>
            <person name="Dobson A."/>
            <person name="Duong T."/>
            <person name="Callanan M."/>
            <person name="Lick S."/>
            <person name="Hamrick A."/>
            <person name="Cano R."/>
            <person name="Klaenhammer T.R."/>
        </authorList>
    </citation>
    <scope>NUCLEOTIDE SEQUENCE [LARGE SCALE GENOMIC DNA]</scope>
    <source>
        <strain>ATCC 700396 / NCK56 / N2 / NCFM</strain>
    </source>
</reference>
<comment type="function">
    <text evidence="1">Catalyzes the interconversion of beta-pyran and beta-furan forms of D-ribose.</text>
</comment>
<comment type="catalytic activity">
    <reaction evidence="1">
        <text>beta-D-ribopyranose = beta-D-ribofuranose</text>
        <dbReference type="Rhea" id="RHEA:25432"/>
        <dbReference type="ChEBI" id="CHEBI:27476"/>
        <dbReference type="ChEBI" id="CHEBI:47002"/>
        <dbReference type="EC" id="5.4.99.62"/>
    </reaction>
</comment>
<comment type="pathway">
    <text evidence="1">Carbohydrate metabolism; D-ribose degradation; D-ribose 5-phosphate from beta-D-ribopyranose: step 1/2.</text>
</comment>
<comment type="subunit">
    <text evidence="1">Homodecamer.</text>
</comment>
<comment type="subcellular location">
    <subcellularLocation>
        <location evidence="1">Cytoplasm</location>
    </subcellularLocation>
</comment>
<comment type="similarity">
    <text evidence="1">Belongs to the RbsD / FucU family. RbsD subfamily.</text>
</comment>
<sequence>MKKTGILNSDISRVVADMGHMDWLGIGDAGTPVPKTTEKIDLAVSAGMPSFISVLKEVLKELQVQKIYVADEIKDSNPKQLENIKRILPDVEIKFIPHTQLKKNLSEAKAFIRTGEETPFSNVILESGVIF</sequence>
<gene>
    <name evidence="1" type="primary">rbsD</name>
    <name type="ordered locus">LBA1484</name>
</gene>
<protein>
    <recommendedName>
        <fullName evidence="1">D-ribose pyranase</fullName>
        <ecNumber evidence="1">5.4.99.62</ecNumber>
    </recommendedName>
</protein>
<evidence type="ECO:0000255" key="1">
    <source>
        <dbReference type="HAMAP-Rule" id="MF_01661"/>
    </source>
</evidence>
<keyword id="KW-0119">Carbohydrate metabolism</keyword>
<keyword id="KW-0963">Cytoplasm</keyword>
<keyword id="KW-0413">Isomerase</keyword>
<keyword id="KW-1185">Reference proteome</keyword>